<accession>P58473</accession>
<gene>
    <name evidence="1" type="primary">pepB</name>
    <name type="ordered locus">Z3790</name>
    <name type="ordered locus">ECs3389</name>
</gene>
<sequence>MTEAMKITLSTQPADARWGEKATYSINNDGITLHLNGADDLGLIQRAARKIDGLGIKHVQLSGEGWDADRCWAFWQGYKAPKGTRKVEWPDLDDAQRQELDNRLMIIDWVRDTINAPAEELGPSQLAQRAVDLISNVASDRVTYRITKGEDLREQGYMGLHTVGRGSERSPVLLALDYNPTGDKEAPVYACLVGKGITFDSGGYSIKQTAFMDSMKSDMGGAATVTGALAFAITRGLNKRVKLFLCCADNLISGNAFKLGDIITYRNGKKVEVMNTDAEGRLVLADGLIDASAQKPEMIIDAATLTGAAKTALGNDYHALFSFDDALAGRLLASASQENEPFWRLPLAEFHRSQLPSNFAELNNTGSAAYPAGASTAAGFLSHFVENYQQGWLHIDCSATYRKAPVEQWSAGATGLGVRTIANLLTA</sequence>
<name>PEPB_ECO57</name>
<protein>
    <recommendedName>
        <fullName evidence="1">Peptidase B</fullName>
        <ecNumber evidence="1">3.4.11.23</ecNumber>
    </recommendedName>
    <alternativeName>
        <fullName evidence="1">Aminopeptidase B</fullName>
    </alternativeName>
</protein>
<feature type="chain" id="PRO_0000165834" description="Peptidase B">
    <location>
        <begin position="1"/>
        <end position="427"/>
    </location>
</feature>
<feature type="active site" evidence="1">
    <location>
        <position position="207"/>
    </location>
</feature>
<feature type="active site" evidence="1">
    <location>
        <position position="281"/>
    </location>
</feature>
<feature type="binding site" evidence="1">
    <location>
        <position position="195"/>
    </location>
    <ligand>
        <name>Mn(2+)</name>
        <dbReference type="ChEBI" id="CHEBI:29035"/>
        <label>2</label>
    </ligand>
</feature>
<feature type="binding site" evidence="1">
    <location>
        <position position="200"/>
    </location>
    <ligand>
        <name>Mn(2+)</name>
        <dbReference type="ChEBI" id="CHEBI:29035"/>
        <label>1</label>
    </ligand>
</feature>
<feature type="binding site" evidence="1">
    <location>
        <position position="200"/>
    </location>
    <ligand>
        <name>Mn(2+)</name>
        <dbReference type="ChEBI" id="CHEBI:29035"/>
        <label>2</label>
    </ligand>
</feature>
<feature type="binding site" evidence="1">
    <location>
        <position position="218"/>
    </location>
    <ligand>
        <name>Mn(2+)</name>
        <dbReference type="ChEBI" id="CHEBI:29035"/>
        <label>2</label>
    </ligand>
</feature>
<feature type="binding site" evidence="1">
    <location>
        <position position="277"/>
    </location>
    <ligand>
        <name>Mn(2+)</name>
        <dbReference type="ChEBI" id="CHEBI:29035"/>
        <label>1</label>
    </ligand>
</feature>
<feature type="binding site" evidence="1">
    <location>
        <position position="279"/>
    </location>
    <ligand>
        <name>Mn(2+)</name>
        <dbReference type="ChEBI" id="CHEBI:29035"/>
        <label>1</label>
    </ligand>
</feature>
<feature type="binding site" evidence="1">
    <location>
        <position position="279"/>
    </location>
    <ligand>
        <name>Mn(2+)</name>
        <dbReference type="ChEBI" id="CHEBI:29035"/>
        <label>2</label>
    </ligand>
</feature>
<keyword id="KW-0031">Aminopeptidase</keyword>
<keyword id="KW-0963">Cytoplasm</keyword>
<keyword id="KW-0378">Hydrolase</keyword>
<keyword id="KW-0464">Manganese</keyword>
<keyword id="KW-0479">Metal-binding</keyword>
<keyword id="KW-0645">Protease</keyword>
<keyword id="KW-1185">Reference proteome</keyword>
<dbReference type="EC" id="3.4.11.23" evidence="1"/>
<dbReference type="EMBL" id="AE005174">
    <property type="protein sequence ID" value="AAG57637.1"/>
    <property type="status" value="ALT_INIT"/>
    <property type="molecule type" value="Genomic_DNA"/>
</dbReference>
<dbReference type="EMBL" id="BA000007">
    <property type="protein sequence ID" value="BAB36812.2"/>
    <property type="molecule type" value="Genomic_DNA"/>
</dbReference>
<dbReference type="PIR" id="A85897">
    <property type="entry name" value="A85897"/>
</dbReference>
<dbReference type="PIR" id="E91052">
    <property type="entry name" value="E91052"/>
</dbReference>
<dbReference type="RefSeq" id="NP_311416.2">
    <property type="nucleotide sequence ID" value="NC_002695.1"/>
</dbReference>
<dbReference type="RefSeq" id="WP_000133587.1">
    <property type="nucleotide sequence ID" value="NZ_VOAI01000001.1"/>
</dbReference>
<dbReference type="SMR" id="P58473"/>
<dbReference type="STRING" id="155864.Z3790"/>
<dbReference type="MEROPS" id="M17.004"/>
<dbReference type="GeneID" id="912754"/>
<dbReference type="KEGG" id="ece:Z3790"/>
<dbReference type="KEGG" id="ecs:ECs_3389"/>
<dbReference type="PATRIC" id="fig|386585.9.peg.3540"/>
<dbReference type="eggNOG" id="COG0260">
    <property type="taxonomic scope" value="Bacteria"/>
</dbReference>
<dbReference type="HOGENOM" id="CLU_013734_7_1_6"/>
<dbReference type="OMA" id="FYQGFYT"/>
<dbReference type="Proteomes" id="UP000000558">
    <property type="component" value="Chromosome"/>
</dbReference>
<dbReference type="Proteomes" id="UP000002519">
    <property type="component" value="Chromosome"/>
</dbReference>
<dbReference type="GO" id="GO:0005737">
    <property type="term" value="C:cytoplasm"/>
    <property type="evidence" value="ECO:0007669"/>
    <property type="project" value="UniProtKB-SubCell"/>
</dbReference>
<dbReference type="GO" id="GO:0030145">
    <property type="term" value="F:manganese ion binding"/>
    <property type="evidence" value="ECO:0007669"/>
    <property type="project" value="UniProtKB-UniRule"/>
</dbReference>
<dbReference type="GO" id="GO:0070006">
    <property type="term" value="F:metalloaminopeptidase activity"/>
    <property type="evidence" value="ECO:0007669"/>
    <property type="project" value="InterPro"/>
</dbReference>
<dbReference type="GO" id="GO:0006508">
    <property type="term" value="P:proteolysis"/>
    <property type="evidence" value="ECO:0007669"/>
    <property type="project" value="UniProtKB-UniRule"/>
</dbReference>
<dbReference type="CDD" id="cd00433">
    <property type="entry name" value="Peptidase_M17"/>
    <property type="match status" value="1"/>
</dbReference>
<dbReference type="FunFam" id="3.40.630.10:FF:000037">
    <property type="entry name" value="Peptidase B"/>
    <property type="match status" value="1"/>
</dbReference>
<dbReference type="Gene3D" id="3.40.630.10">
    <property type="entry name" value="Zn peptidases"/>
    <property type="match status" value="1"/>
</dbReference>
<dbReference type="HAMAP" id="MF_00504">
    <property type="entry name" value="Aminopeptidase_M17"/>
    <property type="match status" value="1"/>
</dbReference>
<dbReference type="InterPro" id="IPR011356">
    <property type="entry name" value="Leucine_aapep/pepB"/>
</dbReference>
<dbReference type="InterPro" id="IPR047620">
    <property type="entry name" value="M17_PepB-like_N"/>
</dbReference>
<dbReference type="InterPro" id="IPR008330">
    <property type="entry name" value="Pept_M17_PepB"/>
</dbReference>
<dbReference type="InterPro" id="IPR000819">
    <property type="entry name" value="Peptidase_M17_C"/>
</dbReference>
<dbReference type="NCBIfam" id="NF003450">
    <property type="entry name" value="PRK05015.1"/>
    <property type="match status" value="1"/>
</dbReference>
<dbReference type="PANTHER" id="PTHR11963">
    <property type="entry name" value="LEUCINE AMINOPEPTIDASE-RELATED"/>
    <property type="match status" value="1"/>
</dbReference>
<dbReference type="PANTHER" id="PTHR11963:SF20">
    <property type="entry name" value="PEPTIDASE B"/>
    <property type="match status" value="1"/>
</dbReference>
<dbReference type="Pfam" id="PF12404">
    <property type="entry name" value="DUF3663"/>
    <property type="match status" value="1"/>
</dbReference>
<dbReference type="Pfam" id="PF00883">
    <property type="entry name" value="Peptidase_M17"/>
    <property type="match status" value="1"/>
</dbReference>
<dbReference type="PIRSF" id="PIRSF036388">
    <property type="entry name" value="Ctsl_amnpptdse_B"/>
    <property type="match status" value="1"/>
</dbReference>
<dbReference type="PRINTS" id="PR00481">
    <property type="entry name" value="LAMNOPPTDASE"/>
</dbReference>
<dbReference type="SUPFAM" id="SSF53187">
    <property type="entry name" value="Zn-dependent exopeptidases"/>
    <property type="match status" value="1"/>
</dbReference>
<dbReference type="PROSITE" id="PS00631">
    <property type="entry name" value="CYTOSOL_AP"/>
    <property type="match status" value="1"/>
</dbReference>
<reference key="1">
    <citation type="journal article" date="2001" name="Nature">
        <title>Genome sequence of enterohaemorrhagic Escherichia coli O157:H7.</title>
        <authorList>
            <person name="Perna N.T."/>
            <person name="Plunkett G. III"/>
            <person name="Burland V."/>
            <person name="Mau B."/>
            <person name="Glasner J.D."/>
            <person name="Rose D.J."/>
            <person name="Mayhew G.F."/>
            <person name="Evans P.S."/>
            <person name="Gregor J."/>
            <person name="Kirkpatrick H.A."/>
            <person name="Posfai G."/>
            <person name="Hackett J."/>
            <person name="Klink S."/>
            <person name="Boutin A."/>
            <person name="Shao Y."/>
            <person name="Miller L."/>
            <person name="Grotbeck E.J."/>
            <person name="Davis N.W."/>
            <person name="Lim A."/>
            <person name="Dimalanta E.T."/>
            <person name="Potamousis K."/>
            <person name="Apodaca J."/>
            <person name="Anantharaman T.S."/>
            <person name="Lin J."/>
            <person name="Yen G."/>
            <person name="Schwartz D.C."/>
            <person name="Welch R.A."/>
            <person name="Blattner F.R."/>
        </authorList>
    </citation>
    <scope>NUCLEOTIDE SEQUENCE [LARGE SCALE GENOMIC DNA]</scope>
    <source>
        <strain>O157:H7 / EDL933 / ATCC 700927 / EHEC</strain>
    </source>
</reference>
<reference key="2">
    <citation type="journal article" date="2001" name="DNA Res.">
        <title>Complete genome sequence of enterohemorrhagic Escherichia coli O157:H7 and genomic comparison with a laboratory strain K-12.</title>
        <authorList>
            <person name="Hayashi T."/>
            <person name="Makino K."/>
            <person name="Ohnishi M."/>
            <person name="Kurokawa K."/>
            <person name="Ishii K."/>
            <person name="Yokoyama K."/>
            <person name="Han C.-G."/>
            <person name="Ohtsubo E."/>
            <person name="Nakayama K."/>
            <person name="Murata T."/>
            <person name="Tanaka M."/>
            <person name="Tobe T."/>
            <person name="Iida T."/>
            <person name="Takami H."/>
            <person name="Honda T."/>
            <person name="Sasakawa C."/>
            <person name="Ogasawara N."/>
            <person name="Yasunaga T."/>
            <person name="Kuhara S."/>
            <person name="Shiba T."/>
            <person name="Hattori M."/>
            <person name="Shinagawa H."/>
        </authorList>
    </citation>
    <scope>NUCLEOTIDE SEQUENCE [LARGE SCALE GENOMIC DNA]</scope>
    <source>
        <strain>O157:H7 / Sakai / RIMD 0509952 / EHEC</strain>
    </source>
</reference>
<comment type="function">
    <text evidence="1">Probably plays an important role in intracellular peptide degradation.</text>
</comment>
<comment type="catalytic activity">
    <reaction evidence="1">
        <text>Release of an N-terminal amino acid, Xaa, from a peptide or arylamide. Xaa is preferably Glu or Asp but may be other amino acids, including Leu, Met, His, Cys and Gln.</text>
        <dbReference type="EC" id="3.4.11.23"/>
    </reaction>
</comment>
<comment type="cofactor">
    <cofactor evidence="1">
        <name>Mn(2+)</name>
        <dbReference type="ChEBI" id="CHEBI:29035"/>
    </cofactor>
    <text evidence="1">Binds 2 manganese ions per subunit.</text>
</comment>
<comment type="subunit">
    <text evidence="1">Homohexamer.</text>
</comment>
<comment type="subcellular location">
    <subcellularLocation>
        <location evidence="1">Cytoplasm</location>
    </subcellularLocation>
</comment>
<comment type="similarity">
    <text evidence="1">Belongs to the peptidase M17 family.</text>
</comment>
<comment type="sequence caution" evidence="2">
    <conflict type="erroneous initiation">
        <sequence resource="EMBL-CDS" id="AAG57637"/>
    </conflict>
    <text>Extended N-terminus.</text>
</comment>
<evidence type="ECO:0000255" key="1">
    <source>
        <dbReference type="HAMAP-Rule" id="MF_00504"/>
    </source>
</evidence>
<evidence type="ECO:0000305" key="2"/>
<organism>
    <name type="scientific">Escherichia coli O157:H7</name>
    <dbReference type="NCBI Taxonomy" id="83334"/>
    <lineage>
        <taxon>Bacteria</taxon>
        <taxon>Pseudomonadati</taxon>
        <taxon>Pseudomonadota</taxon>
        <taxon>Gammaproteobacteria</taxon>
        <taxon>Enterobacterales</taxon>
        <taxon>Enterobacteriaceae</taxon>
        <taxon>Escherichia</taxon>
    </lineage>
</organism>
<proteinExistence type="inferred from homology"/>